<accession>Q54C94</accession>
<accession>Q8IS17</accession>
<keyword id="KW-0344">Guanine-nucleotide releasing factor</keyword>
<keyword id="KW-0880">Kelch repeat</keyword>
<keyword id="KW-1185">Reference proteome</keyword>
<keyword id="KW-0677">Repeat</keyword>
<reference key="1">
    <citation type="journal article" date="2005" name="Genome Biol.">
        <title>The Dictyostelium genome encodes numerous RasGEFs with multiple biological roles.</title>
        <authorList>
            <person name="Wilkins A."/>
            <person name="Szafranski K."/>
            <person name="Fraser D.J."/>
            <person name="Bakthavatsalam D."/>
            <person name="Mueller R."/>
            <person name="Fisher P.R."/>
            <person name="Gloeckner G."/>
            <person name="Eichinger L."/>
            <person name="Noegel A.A."/>
            <person name="Insall R.H."/>
        </authorList>
    </citation>
    <scope>NUCLEOTIDE SEQUENCE [GENOMIC DNA]</scope>
    <scope>DEVELOPMENTAL STAGE</scope>
    <source>
        <strain>AX4</strain>
    </source>
</reference>
<reference key="2">
    <citation type="journal article" date="2005" name="Nature">
        <title>The genome of the social amoeba Dictyostelium discoideum.</title>
        <authorList>
            <person name="Eichinger L."/>
            <person name="Pachebat J.A."/>
            <person name="Gloeckner G."/>
            <person name="Rajandream M.A."/>
            <person name="Sucgang R."/>
            <person name="Berriman M."/>
            <person name="Song J."/>
            <person name="Olsen R."/>
            <person name="Szafranski K."/>
            <person name="Xu Q."/>
            <person name="Tunggal B."/>
            <person name="Kummerfeld S."/>
            <person name="Madera M."/>
            <person name="Konfortov B.A."/>
            <person name="Rivero F."/>
            <person name="Bankier A.T."/>
            <person name="Lehmann R."/>
            <person name="Hamlin N."/>
            <person name="Davies R."/>
            <person name="Gaudet P."/>
            <person name="Fey P."/>
            <person name="Pilcher K."/>
            <person name="Chen G."/>
            <person name="Saunders D."/>
            <person name="Sodergren E.J."/>
            <person name="Davis P."/>
            <person name="Kerhornou A."/>
            <person name="Nie X."/>
            <person name="Hall N."/>
            <person name="Anjard C."/>
            <person name="Hemphill L."/>
            <person name="Bason N."/>
            <person name="Farbrother P."/>
            <person name="Desany B."/>
            <person name="Just E."/>
            <person name="Morio T."/>
            <person name="Rost R."/>
            <person name="Churcher C.M."/>
            <person name="Cooper J."/>
            <person name="Haydock S."/>
            <person name="van Driessche N."/>
            <person name="Cronin A."/>
            <person name="Goodhead I."/>
            <person name="Muzny D.M."/>
            <person name="Mourier T."/>
            <person name="Pain A."/>
            <person name="Lu M."/>
            <person name="Harper D."/>
            <person name="Lindsay R."/>
            <person name="Hauser H."/>
            <person name="James K.D."/>
            <person name="Quiles M."/>
            <person name="Madan Babu M."/>
            <person name="Saito T."/>
            <person name="Buchrieser C."/>
            <person name="Wardroper A."/>
            <person name="Felder M."/>
            <person name="Thangavelu M."/>
            <person name="Johnson D."/>
            <person name="Knights A."/>
            <person name="Loulseged H."/>
            <person name="Mungall K.L."/>
            <person name="Oliver K."/>
            <person name="Price C."/>
            <person name="Quail M.A."/>
            <person name="Urushihara H."/>
            <person name="Hernandez J."/>
            <person name="Rabbinowitsch E."/>
            <person name="Steffen D."/>
            <person name="Sanders M."/>
            <person name="Ma J."/>
            <person name="Kohara Y."/>
            <person name="Sharp S."/>
            <person name="Simmonds M.N."/>
            <person name="Spiegler S."/>
            <person name="Tivey A."/>
            <person name="Sugano S."/>
            <person name="White B."/>
            <person name="Walker D."/>
            <person name="Woodward J.R."/>
            <person name="Winckler T."/>
            <person name="Tanaka Y."/>
            <person name="Shaulsky G."/>
            <person name="Schleicher M."/>
            <person name="Weinstock G.M."/>
            <person name="Rosenthal A."/>
            <person name="Cox E.C."/>
            <person name="Chisholm R.L."/>
            <person name="Gibbs R.A."/>
            <person name="Loomis W.F."/>
            <person name="Platzer M."/>
            <person name="Kay R.R."/>
            <person name="Williams J.G."/>
            <person name="Dear P.H."/>
            <person name="Noegel A.A."/>
            <person name="Barrell B.G."/>
            <person name="Kuspa A."/>
        </authorList>
    </citation>
    <scope>NUCLEOTIDE SEQUENCE [LARGE SCALE GENOMIC DNA]</scope>
    <source>
        <strain>AX4</strain>
    </source>
</reference>
<reference key="3">
    <citation type="journal article" date="2008" name="BMC Microbiol.">
        <title>Dictyostelium transcriptional responses to Pseudomonas aeruginosa: common and specific effects from PAO1 and PA14 strains.</title>
        <authorList>
            <person name="Carilla-Latorre S."/>
            <person name="Calvo-Garrido J."/>
            <person name="Bloomfield G."/>
            <person name="Skelton J."/>
            <person name="Kay R.R."/>
            <person name="Ivens A."/>
            <person name="Martinez J.L."/>
            <person name="Escalante R."/>
        </authorList>
    </citation>
    <scope>INDUCTION [LARGE SCALE ANALYSIS]</scope>
</reference>
<reference key="4">
    <citation type="journal article" date="2008" name="BMC Genomics">
        <title>Genome-wide transcriptional changes induced by phagocytosis or growth on bacteria in Dictyostelium.</title>
        <authorList>
            <person name="Sillo A."/>
            <person name="Bloomfield G."/>
            <person name="Balest A."/>
            <person name="Balbo A."/>
            <person name="Pergolizzi B."/>
            <person name="Peracino B."/>
            <person name="Skelton J."/>
            <person name="Ivens A."/>
            <person name="Bozzaro S."/>
        </authorList>
    </citation>
    <scope>IDENTIFICATION</scope>
</reference>
<comment type="function">
    <text evidence="1">Promotes the exchange of Ras-bound GDP by GTP.</text>
</comment>
<comment type="developmental stage">
    <text evidence="6">Expressed during development; with a peak of expression at 4 hours of development.</text>
</comment>
<comment type="induction">
    <text evidence="7">Down-regulated by Pseudomonas aeruginosa, PAO1 strain and PA14 strain infection and by phagocytic stimuli.</text>
</comment>
<protein>
    <recommendedName>
        <fullName>Ras guanine nucleotide exchange factor F</fullName>
    </recommendedName>
    <alternativeName>
        <fullName>RasGEF domain-containing protein F</fullName>
    </alternativeName>
</protein>
<evidence type="ECO:0000250" key="1"/>
<evidence type="ECO:0000255" key="2">
    <source>
        <dbReference type="PROSITE-ProRule" id="PRU00126"/>
    </source>
</evidence>
<evidence type="ECO:0000255" key="3">
    <source>
        <dbReference type="PROSITE-ProRule" id="PRU00135"/>
    </source>
</evidence>
<evidence type="ECO:0000255" key="4">
    <source>
        <dbReference type="PROSITE-ProRule" id="PRU00168"/>
    </source>
</evidence>
<evidence type="ECO:0000256" key="5">
    <source>
        <dbReference type="SAM" id="MobiDB-lite"/>
    </source>
</evidence>
<evidence type="ECO:0000269" key="6">
    <source>
    </source>
</evidence>
<evidence type="ECO:0000269" key="7">
    <source>
    </source>
</evidence>
<evidence type="ECO:0000305" key="8"/>
<organism>
    <name type="scientific">Dictyostelium discoideum</name>
    <name type="common">Social amoeba</name>
    <dbReference type="NCBI Taxonomy" id="44689"/>
    <lineage>
        <taxon>Eukaryota</taxon>
        <taxon>Amoebozoa</taxon>
        <taxon>Evosea</taxon>
        <taxon>Eumycetozoa</taxon>
        <taxon>Dictyostelia</taxon>
        <taxon>Dictyosteliales</taxon>
        <taxon>Dictyosteliaceae</taxon>
        <taxon>Dictyostelium</taxon>
    </lineage>
</organism>
<proteinExistence type="evidence at transcript level"/>
<name>GEFF_DICDI</name>
<sequence length="1127" mass="126465">MTDKLKFKTSLLNKVPPPPPKSNQPSPSTSTPASPNVNSTNNSPSVSPATTSPIPSPGMSPLLTPENNNNNTNIPHQTSLLNNSISNKSSVSFLNNSGGNTINKSSPLSQSSSNIKNGGPIRTSTTLAQFSGSSLPNTENSSPPPSSSLISSSSSPTAESLLYSEDSIASGGTVTVDPNTKNGNIYNGNGLRNNSADILPHNNHTYCVGDDGFYLFGGTLPDGSYTNDFYTFQFAIKAWTILTFGSAPSIRTRHTGVLYNNSMYIFGGYSPSGPKNDIYVFSFDTQTWSEVQTEGTKPSPRYGHTAVVESGHMIVFGGISCDQTTKQQTVNNDIFSLNLDTKQWSQVLSTCPPSPRTHHTATMHKGNMYVFGGQDQQSNQVEDIVHCYTWASNSWKSIQFEGSSMTPRSDHSAVLFQDSIFISGGSSKSQTSQNLEIYEYDLYQKKCFKISSSTIVQNRISHSSVVKGNSILFWGGCTDNSFDYFSFGKDEFEEDYQDDYESNRVQNIPKELWEASLMKKHPEILELREKTLAFTGSKSFAKTLATPSFSENRLALSHQFVLQLIMEYLERNTYHKVIAAIQKESGVLHQPTESGESRLVSLLRLVKPRLRNKNVFDTDLSLFSKEEGNDPEVAVVDHLYHDYRHFDEEEDINVWEEGEDNNRNIRKVETDNNKVQIKAATFNKLIHYLAPKEKAFDPNFLKVFLYTHSSFTTSEKLLKKLIQRYQVPNSNANEPKYKSEVVEPVRQRVVDVLKYWVDKCPWDFNAGPTSSVLVATLNNFIDGSLTRDGNSNIKKLRELKKKLQHEDVRPYSEPPPEPKVPKNIFSPQLTLAHIDELEIARQMTLVESKLFGAIPPPEFMVRVIGYGEFQYNMATSPNLMTFVNRATDVSRWIVHTVLNESRDKKNKMKMLDKFIKTTECLRQLNNFQTLHSVLQGLQHPLLLSRPDLFTPRHREIIADHEMLFSKIDNYKLYREALARSQPACVPWIDIIREDFAQIERDQPSNMNNLINFTKRQNLYEILSKIGHYQFPYNLQIVHQVATFVNKLPKYSEYDLNLLSESLQSQVNSPLAGVYQPSLIGTTGSSSSINLGSARELNNSNRDSNNITGSSSNNNSNSSNSLSPIVKL</sequence>
<gene>
    <name type="primary">gefF</name>
    <name type="synonym">rasGEFF</name>
    <name type="ORF">DDB_G0293006</name>
</gene>
<dbReference type="EMBL" id="AY160095">
    <property type="protein sequence ID" value="AAN46875.1"/>
    <property type="molecule type" value="Genomic_DNA"/>
</dbReference>
<dbReference type="EMBL" id="AAFI02000199">
    <property type="protein sequence ID" value="EAL60855.1"/>
    <property type="molecule type" value="Genomic_DNA"/>
</dbReference>
<dbReference type="RefSeq" id="XP_629325.1">
    <property type="nucleotide sequence ID" value="XM_629323.1"/>
</dbReference>
<dbReference type="SMR" id="Q54C94"/>
<dbReference type="FunCoup" id="Q54C94">
    <property type="interactions" value="75"/>
</dbReference>
<dbReference type="STRING" id="44689.Q54C94"/>
<dbReference type="GlyGen" id="Q54C94">
    <property type="glycosylation" value="2 sites"/>
</dbReference>
<dbReference type="PaxDb" id="44689-DDB0215365"/>
<dbReference type="EnsemblProtists" id="EAL60855">
    <property type="protein sequence ID" value="EAL60855"/>
    <property type="gene ID" value="DDB_G0293006"/>
</dbReference>
<dbReference type="GeneID" id="8629049"/>
<dbReference type="KEGG" id="ddi:DDB_G0293006"/>
<dbReference type="dictyBase" id="DDB_G0293006">
    <property type="gene designation" value="gefF"/>
</dbReference>
<dbReference type="VEuPathDB" id="AmoebaDB:DDB_G0293006"/>
<dbReference type="eggNOG" id="KOG0379">
    <property type="taxonomic scope" value="Eukaryota"/>
</dbReference>
<dbReference type="eggNOG" id="KOG3417">
    <property type="taxonomic scope" value="Eukaryota"/>
</dbReference>
<dbReference type="HOGENOM" id="CLU_279577_0_0_1"/>
<dbReference type="InParanoid" id="Q54C94"/>
<dbReference type="OMA" id="DKCPWDF"/>
<dbReference type="Reactome" id="R-DDI-193648">
    <property type="pathway name" value="NRAGE signals death through JNK"/>
</dbReference>
<dbReference type="Reactome" id="R-DDI-9013148">
    <property type="pathway name" value="CDC42 GTPase cycle"/>
</dbReference>
<dbReference type="Reactome" id="R-DDI-9013149">
    <property type="pathway name" value="RAC1 GTPase cycle"/>
</dbReference>
<dbReference type="PRO" id="PR:Q54C94"/>
<dbReference type="Proteomes" id="UP000002195">
    <property type="component" value="Chromosome 6"/>
</dbReference>
<dbReference type="GO" id="GO:0044354">
    <property type="term" value="C:macropinosome"/>
    <property type="evidence" value="ECO:0000314"/>
    <property type="project" value="dictyBase"/>
</dbReference>
<dbReference type="GO" id="GO:0005886">
    <property type="term" value="C:plasma membrane"/>
    <property type="evidence" value="ECO:0000318"/>
    <property type="project" value="GO_Central"/>
</dbReference>
<dbReference type="GO" id="GO:0005085">
    <property type="term" value="F:guanyl-nucleotide exchange factor activity"/>
    <property type="evidence" value="ECO:0000318"/>
    <property type="project" value="GO_Central"/>
</dbReference>
<dbReference type="GO" id="GO:0044351">
    <property type="term" value="P:macropinocytosis"/>
    <property type="evidence" value="ECO:0000315"/>
    <property type="project" value="dictyBase"/>
</dbReference>
<dbReference type="GO" id="GO:0007265">
    <property type="term" value="P:Ras protein signal transduction"/>
    <property type="evidence" value="ECO:0000318"/>
    <property type="project" value="GO_Central"/>
</dbReference>
<dbReference type="CDD" id="cd06224">
    <property type="entry name" value="REM"/>
    <property type="match status" value="1"/>
</dbReference>
<dbReference type="Gene3D" id="2.120.10.80">
    <property type="entry name" value="Kelch-type beta propeller"/>
    <property type="match status" value="2"/>
</dbReference>
<dbReference type="Gene3D" id="1.10.840.10">
    <property type="entry name" value="Ras guanine-nucleotide exchange factors catalytic domain"/>
    <property type="match status" value="1"/>
</dbReference>
<dbReference type="Gene3D" id="1.20.870.10">
    <property type="entry name" value="Son of sevenless (SoS) protein Chain: S domain 1"/>
    <property type="match status" value="1"/>
</dbReference>
<dbReference type="InterPro" id="IPR056737">
    <property type="entry name" value="Beta-prop_ATRN-MKLN-like"/>
</dbReference>
<dbReference type="InterPro" id="IPR015915">
    <property type="entry name" value="Kelch-typ_b-propeller"/>
</dbReference>
<dbReference type="InterPro" id="IPR006652">
    <property type="entry name" value="Kelch_1"/>
</dbReference>
<dbReference type="InterPro" id="IPR006594">
    <property type="entry name" value="LisH"/>
</dbReference>
<dbReference type="InterPro" id="IPR000651">
    <property type="entry name" value="Ras-like_Gua-exchang_fac_N"/>
</dbReference>
<dbReference type="InterPro" id="IPR023578">
    <property type="entry name" value="Ras_GEF_dom_sf"/>
</dbReference>
<dbReference type="InterPro" id="IPR001895">
    <property type="entry name" value="RASGEF_cat_dom"/>
</dbReference>
<dbReference type="InterPro" id="IPR036964">
    <property type="entry name" value="RASGEF_cat_dom_sf"/>
</dbReference>
<dbReference type="PANTHER" id="PTHR46093">
    <property type="entry name" value="ACYL-COA-BINDING DOMAIN-CONTAINING PROTEIN 5"/>
    <property type="match status" value="1"/>
</dbReference>
<dbReference type="PANTHER" id="PTHR46093:SF9">
    <property type="entry name" value="DCD DOMAIN-CONTAINING PROTEIN"/>
    <property type="match status" value="1"/>
</dbReference>
<dbReference type="Pfam" id="PF24981">
    <property type="entry name" value="Beta-prop_ATRN-LZTR1"/>
    <property type="match status" value="1"/>
</dbReference>
<dbReference type="Pfam" id="PF00617">
    <property type="entry name" value="RasGEF"/>
    <property type="match status" value="1"/>
</dbReference>
<dbReference type="Pfam" id="PF00618">
    <property type="entry name" value="RasGEF_N"/>
    <property type="match status" value="1"/>
</dbReference>
<dbReference type="SMART" id="SM00612">
    <property type="entry name" value="Kelch"/>
    <property type="match status" value="3"/>
</dbReference>
<dbReference type="SMART" id="SM00147">
    <property type="entry name" value="RasGEF"/>
    <property type="match status" value="1"/>
</dbReference>
<dbReference type="SMART" id="SM00229">
    <property type="entry name" value="RasGEFN"/>
    <property type="match status" value="1"/>
</dbReference>
<dbReference type="SUPFAM" id="SSF117281">
    <property type="entry name" value="Kelch motif"/>
    <property type="match status" value="2"/>
</dbReference>
<dbReference type="SUPFAM" id="SSF48366">
    <property type="entry name" value="Ras GEF"/>
    <property type="match status" value="1"/>
</dbReference>
<dbReference type="PROSITE" id="PS50896">
    <property type="entry name" value="LISH"/>
    <property type="match status" value="1"/>
</dbReference>
<dbReference type="PROSITE" id="PS50009">
    <property type="entry name" value="RASGEF_CAT"/>
    <property type="match status" value="1"/>
</dbReference>
<dbReference type="PROSITE" id="PS50212">
    <property type="entry name" value="RASGEF_NTER"/>
    <property type="match status" value="1"/>
</dbReference>
<feature type="chain" id="PRO_0000384464" description="Ras guanine nucleotide exchange factor F">
    <location>
        <begin position="1"/>
        <end position="1127"/>
    </location>
</feature>
<feature type="repeat" description="Kelch 1">
    <location>
        <begin position="212"/>
        <end position="261"/>
    </location>
</feature>
<feature type="repeat" description="Kelch 2">
    <location>
        <begin position="262"/>
        <end position="311"/>
    </location>
</feature>
<feature type="repeat" description="Kelch 3">
    <location>
        <begin position="313"/>
        <end position="366"/>
    </location>
</feature>
<feature type="repeat" description="Kelch 4">
    <location>
        <begin position="367"/>
        <end position="418"/>
    </location>
</feature>
<feature type="repeat" description="Kelch 5">
    <location>
        <begin position="420"/>
        <end position="469"/>
    </location>
</feature>
<feature type="domain" description="LisH" evidence="2">
    <location>
        <begin position="557"/>
        <end position="589"/>
    </location>
</feature>
<feature type="domain" description="N-terminal Ras-GEF" evidence="3">
    <location>
        <begin position="673"/>
        <end position="804"/>
    </location>
</feature>
<feature type="domain" description="Ras-GEF" evidence="4">
    <location>
        <begin position="835"/>
        <end position="1062"/>
    </location>
</feature>
<feature type="region of interest" description="Disordered" evidence="5">
    <location>
        <begin position="1"/>
        <end position="82"/>
    </location>
</feature>
<feature type="region of interest" description="Disordered" evidence="5">
    <location>
        <begin position="96"/>
        <end position="154"/>
    </location>
</feature>
<feature type="region of interest" description="Disordered" evidence="5">
    <location>
        <begin position="1090"/>
        <end position="1127"/>
    </location>
</feature>
<feature type="compositionally biased region" description="Low complexity" evidence="5">
    <location>
        <begin position="23"/>
        <end position="53"/>
    </location>
</feature>
<feature type="compositionally biased region" description="Low complexity" evidence="5">
    <location>
        <begin position="67"/>
        <end position="82"/>
    </location>
</feature>
<feature type="compositionally biased region" description="Polar residues" evidence="5">
    <location>
        <begin position="122"/>
        <end position="132"/>
    </location>
</feature>
<feature type="compositionally biased region" description="Low complexity" evidence="5">
    <location>
        <begin position="133"/>
        <end position="154"/>
    </location>
</feature>
<feature type="compositionally biased region" description="Low complexity" evidence="5">
    <location>
        <begin position="1103"/>
        <end position="1127"/>
    </location>
</feature>
<feature type="sequence conflict" description="In Ref. 1; AAN46875." evidence="8" ref="1">
    <original>A</original>
    <variation>E</variation>
    <location>
        <position position="579"/>
    </location>
</feature>
<feature type="sequence conflict" description="In Ref. 1; AAN46875." evidence="8" ref="1">
    <original>F</original>
    <variation>L</variation>
    <location>
        <position position="646"/>
    </location>
</feature>
<feature type="sequence conflict" description="In Ref. 1; AAN46875." evidence="8" ref="1">
    <original>N</original>
    <variation>T</variation>
    <location>
        <position position="653"/>
    </location>
</feature>
<feature type="sequence conflict" description="In Ref. 1; AAN46875." evidence="8" ref="1">
    <original>N</original>
    <variation>T</variation>
    <location>
        <position position="661"/>
    </location>
</feature>